<feature type="chain" id="PRO_0000321212" description="Ribosome-binding factor A">
    <location>
        <begin position="1"/>
        <end position="131"/>
    </location>
</feature>
<comment type="function">
    <text evidence="1">One of several proteins that assist in the late maturation steps of the functional core of the 30S ribosomal subunit. Associates with free 30S ribosomal subunits (but not with 30S subunits that are part of 70S ribosomes or polysomes). Required for efficient processing of 16S rRNA. May interact with the 5'-terminal helix region of 16S rRNA.</text>
</comment>
<comment type="subunit">
    <text evidence="1">Monomer. Binds 30S ribosomal subunits, but not 50S ribosomal subunits or 70S ribosomes.</text>
</comment>
<comment type="subcellular location">
    <subcellularLocation>
        <location evidence="1">Cytoplasm</location>
    </subcellularLocation>
</comment>
<comment type="similarity">
    <text evidence="1">Belongs to the RbfA family.</text>
</comment>
<reference key="1">
    <citation type="journal article" date="2011" name="Stand. Genomic Sci.">
        <title>Complete genome sequence of the halophilic and highly halotolerant Chromohalobacter salexigens type strain (1H11(T)).</title>
        <authorList>
            <person name="Copeland A."/>
            <person name="O'Connor K."/>
            <person name="Lucas S."/>
            <person name="Lapidus A."/>
            <person name="Berry K.W."/>
            <person name="Detter J.C."/>
            <person name="Del Rio T.G."/>
            <person name="Hammon N."/>
            <person name="Dalin E."/>
            <person name="Tice H."/>
            <person name="Pitluck S."/>
            <person name="Bruce D."/>
            <person name="Goodwin L."/>
            <person name="Han C."/>
            <person name="Tapia R."/>
            <person name="Saunders E."/>
            <person name="Schmutz J."/>
            <person name="Brettin T."/>
            <person name="Larimer F."/>
            <person name="Land M."/>
            <person name="Hauser L."/>
            <person name="Vargas C."/>
            <person name="Nieto J.J."/>
            <person name="Kyrpides N.C."/>
            <person name="Ivanova N."/>
            <person name="Goker M."/>
            <person name="Klenk H.P."/>
            <person name="Csonka L.N."/>
            <person name="Woyke T."/>
        </authorList>
    </citation>
    <scope>NUCLEOTIDE SEQUENCE [LARGE SCALE GENOMIC DNA]</scope>
    <source>
        <strain>ATCC BAA-138 / DSM 3043 / CIP 106854 / NCIMB 13768 / 1H11</strain>
    </source>
</reference>
<sequence>MREFKRTDRVADQLQQELAVLIQREIKDPRLGMVTVSSVKVSRDLGYADIYITLLGENDAARIDENLKVLRHARGFLRSQIANRIKLRHVPELRFHYDESVVRGQRLSSLIDEAVADDRRRHEDDDEDEVR</sequence>
<keyword id="KW-0963">Cytoplasm</keyword>
<keyword id="KW-1185">Reference proteome</keyword>
<keyword id="KW-0690">Ribosome biogenesis</keyword>
<organism>
    <name type="scientific">Chromohalobacter salexigens (strain ATCC BAA-138 / DSM 3043 / CIP 106854 / NCIMB 13768 / 1H11)</name>
    <dbReference type="NCBI Taxonomy" id="290398"/>
    <lineage>
        <taxon>Bacteria</taxon>
        <taxon>Pseudomonadati</taxon>
        <taxon>Pseudomonadota</taxon>
        <taxon>Gammaproteobacteria</taxon>
        <taxon>Oceanospirillales</taxon>
        <taxon>Halomonadaceae</taxon>
        <taxon>Chromohalobacter</taxon>
    </lineage>
</organism>
<name>RBFA_CHRSD</name>
<proteinExistence type="inferred from homology"/>
<dbReference type="EMBL" id="CP000285">
    <property type="protein sequence ID" value="ABE60417.1"/>
    <property type="molecule type" value="Genomic_DNA"/>
</dbReference>
<dbReference type="RefSeq" id="WP_011508363.1">
    <property type="nucleotide sequence ID" value="NC_007963.1"/>
</dbReference>
<dbReference type="SMR" id="Q1QSZ1"/>
<dbReference type="STRING" id="290398.Csal_3073"/>
<dbReference type="GeneID" id="95335767"/>
<dbReference type="KEGG" id="csa:Csal_3073"/>
<dbReference type="eggNOG" id="COG0858">
    <property type="taxonomic scope" value="Bacteria"/>
</dbReference>
<dbReference type="HOGENOM" id="CLU_089475_5_0_6"/>
<dbReference type="OrthoDB" id="307788at2"/>
<dbReference type="Proteomes" id="UP000000239">
    <property type="component" value="Chromosome"/>
</dbReference>
<dbReference type="GO" id="GO:0005829">
    <property type="term" value="C:cytosol"/>
    <property type="evidence" value="ECO:0007669"/>
    <property type="project" value="TreeGrafter"/>
</dbReference>
<dbReference type="GO" id="GO:0043024">
    <property type="term" value="F:ribosomal small subunit binding"/>
    <property type="evidence" value="ECO:0007669"/>
    <property type="project" value="TreeGrafter"/>
</dbReference>
<dbReference type="GO" id="GO:0030490">
    <property type="term" value="P:maturation of SSU-rRNA"/>
    <property type="evidence" value="ECO:0007669"/>
    <property type="project" value="UniProtKB-UniRule"/>
</dbReference>
<dbReference type="Gene3D" id="3.30.300.20">
    <property type="match status" value="1"/>
</dbReference>
<dbReference type="HAMAP" id="MF_00003">
    <property type="entry name" value="RbfA"/>
    <property type="match status" value="1"/>
</dbReference>
<dbReference type="InterPro" id="IPR015946">
    <property type="entry name" value="KH_dom-like_a/b"/>
</dbReference>
<dbReference type="InterPro" id="IPR000238">
    <property type="entry name" value="RbfA"/>
</dbReference>
<dbReference type="InterPro" id="IPR023799">
    <property type="entry name" value="RbfA_dom_sf"/>
</dbReference>
<dbReference type="InterPro" id="IPR020053">
    <property type="entry name" value="Ribosome-bd_factorA_CS"/>
</dbReference>
<dbReference type="NCBIfam" id="TIGR00082">
    <property type="entry name" value="rbfA"/>
    <property type="match status" value="1"/>
</dbReference>
<dbReference type="PANTHER" id="PTHR33515">
    <property type="entry name" value="RIBOSOME-BINDING FACTOR A, CHLOROPLASTIC-RELATED"/>
    <property type="match status" value="1"/>
</dbReference>
<dbReference type="PANTHER" id="PTHR33515:SF1">
    <property type="entry name" value="RIBOSOME-BINDING FACTOR A, CHLOROPLASTIC-RELATED"/>
    <property type="match status" value="1"/>
</dbReference>
<dbReference type="Pfam" id="PF02033">
    <property type="entry name" value="RBFA"/>
    <property type="match status" value="1"/>
</dbReference>
<dbReference type="SUPFAM" id="SSF89919">
    <property type="entry name" value="Ribosome-binding factor A, RbfA"/>
    <property type="match status" value="1"/>
</dbReference>
<dbReference type="PROSITE" id="PS01319">
    <property type="entry name" value="RBFA"/>
    <property type="match status" value="1"/>
</dbReference>
<accession>Q1QSZ1</accession>
<evidence type="ECO:0000255" key="1">
    <source>
        <dbReference type="HAMAP-Rule" id="MF_00003"/>
    </source>
</evidence>
<gene>
    <name evidence="1" type="primary">rbfA</name>
    <name type="ordered locus">Csal_3073</name>
</gene>
<protein>
    <recommendedName>
        <fullName evidence="1">Ribosome-binding factor A</fullName>
    </recommendedName>
</protein>